<dbReference type="EC" id="3.1.1.4"/>
<dbReference type="EMBL" id="EU196554">
    <property type="protein sequence ID" value="ABX82863.1"/>
    <property type="molecule type" value="mRNA"/>
</dbReference>
<dbReference type="SMR" id="C1IC46"/>
<dbReference type="TopDownProteomics" id="C1IC46"/>
<dbReference type="GO" id="GO:0005576">
    <property type="term" value="C:extracellular region"/>
    <property type="evidence" value="ECO:0007669"/>
    <property type="project" value="UniProtKB-SubCell"/>
</dbReference>
<dbReference type="GO" id="GO:0005509">
    <property type="term" value="F:calcium ion binding"/>
    <property type="evidence" value="ECO:0007669"/>
    <property type="project" value="InterPro"/>
</dbReference>
<dbReference type="GO" id="GO:0047498">
    <property type="term" value="F:calcium-dependent phospholipase A2 activity"/>
    <property type="evidence" value="ECO:0007669"/>
    <property type="project" value="TreeGrafter"/>
</dbReference>
<dbReference type="GO" id="GO:0005543">
    <property type="term" value="F:phospholipid binding"/>
    <property type="evidence" value="ECO:0007669"/>
    <property type="project" value="TreeGrafter"/>
</dbReference>
<dbReference type="GO" id="GO:0090729">
    <property type="term" value="F:toxin activity"/>
    <property type="evidence" value="ECO:0007669"/>
    <property type="project" value="UniProtKB-KW"/>
</dbReference>
<dbReference type="GO" id="GO:0050482">
    <property type="term" value="P:arachidonate secretion"/>
    <property type="evidence" value="ECO:0007669"/>
    <property type="project" value="InterPro"/>
</dbReference>
<dbReference type="GO" id="GO:0016042">
    <property type="term" value="P:lipid catabolic process"/>
    <property type="evidence" value="ECO:0007669"/>
    <property type="project" value="UniProtKB-KW"/>
</dbReference>
<dbReference type="GO" id="GO:0006644">
    <property type="term" value="P:phospholipid metabolic process"/>
    <property type="evidence" value="ECO:0007669"/>
    <property type="project" value="InterPro"/>
</dbReference>
<dbReference type="CDD" id="cd00125">
    <property type="entry name" value="PLA2c"/>
    <property type="match status" value="1"/>
</dbReference>
<dbReference type="FunFam" id="1.20.90.10:FF:000007">
    <property type="entry name" value="Acidic phospholipase A2"/>
    <property type="match status" value="1"/>
</dbReference>
<dbReference type="Gene3D" id="1.20.90.10">
    <property type="entry name" value="Phospholipase A2 domain"/>
    <property type="match status" value="1"/>
</dbReference>
<dbReference type="InterPro" id="IPR001211">
    <property type="entry name" value="PLipase_A2"/>
</dbReference>
<dbReference type="InterPro" id="IPR033112">
    <property type="entry name" value="PLipase_A2_Asp_AS"/>
</dbReference>
<dbReference type="InterPro" id="IPR016090">
    <property type="entry name" value="PLipase_A2_dom"/>
</dbReference>
<dbReference type="InterPro" id="IPR036444">
    <property type="entry name" value="PLipase_A2_dom_sf"/>
</dbReference>
<dbReference type="InterPro" id="IPR033113">
    <property type="entry name" value="PLipase_A2_His_AS"/>
</dbReference>
<dbReference type="PANTHER" id="PTHR11716:SF94">
    <property type="entry name" value="PHOSPHOLIPASE A2"/>
    <property type="match status" value="1"/>
</dbReference>
<dbReference type="PANTHER" id="PTHR11716">
    <property type="entry name" value="PHOSPHOLIPASE A2 FAMILY MEMBER"/>
    <property type="match status" value="1"/>
</dbReference>
<dbReference type="Pfam" id="PF00068">
    <property type="entry name" value="Phospholip_A2_1"/>
    <property type="match status" value="1"/>
</dbReference>
<dbReference type="PRINTS" id="PR00389">
    <property type="entry name" value="PHPHLIPASEA2"/>
</dbReference>
<dbReference type="SMART" id="SM00085">
    <property type="entry name" value="PA2c"/>
    <property type="match status" value="1"/>
</dbReference>
<dbReference type="SUPFAM" id="SSF48619">
    <property type="entry name" value="Phospholipase A2, PLA2"/>
    <property type="match status" value="1"/>
</dbReference>
<dbReference type="PROSITE" id="PS00119">
    <property type="entry name" value="PA2_ASP"/>
    <property type="match status" value="1"/>
</dbReference>
<dbReference type="PROSITE" id="PS00118">
    <property type="entry name" value="PA2_HIS"/>
    <property type="match status" value="1"/>
</dbReference>
<reference key="1">
    <citation type="journal article" date="2008" name="Toxicon">
        <title>Cloning, characterization and phylogenetic analyses of members of three major venom families from a single specimen of Walterinnesia aegyptia.</title>
        <authorList>
            <person name="Tsai H.-Y."/>
            <person name="Wang Y.M."/>
            <person name="Tsai I.-H."/>
        </authorList>
    </citation>
    <scope>NUCLEOTIDE SEQUENCE [MRNA]</scope>
    <scope>FUNCTION</scope>
    <scope>MASS SPECTROMETRY</scope>
    <source>
        <tissue>Venom</tissue>
        <tissue>Venom gland</tissue>
    </source>
</reference>
<protein>
    <recommendedName>
        <fullName>Acidic phospholipase A2 PL-I</fullName>
        <shortName>svPLA2</shortName>
        <ecNumber>3.1.1.4</ecNumber>
    </recommendedName>
    <alternativeName>
        <fullName>Phosphatidylcholine 2-acylhydrolase</fullName>
    </alternativeName>
</protein>
<name>PA2A1_WALAE</name>
<feature type="signal peptide" evidence="2">
    <location>
        <begin position="1" status="less than"/>
        <end position="17"/>
    </location>
</feature>
<feature type="chain" id="PRO_5000456111" description="Acidic phospholipase A2 PL-I">
    <location>
        <begin position="18"/>
        <end position="137"/>
    </location>
</feature>
<feature type="active site" evidence="1">
    <location>
        <position position="65"/>
    </location>
</feature>
<feature type="active site" evidence="1">
    <location>
        <position position="111"/>
    </location>
</feature>
<feature type="binding site" evidence="1">
    <location>
        <position position="45"/>
    </location>
    <ligand>
        <name>Ca(2+)</name>
        <dbReference type="ChEBI" id="CHEBI:29108"/>
    </ligand>
</feature>
<feature type="binding site" evidence="1">
    <location>
        <position position="47"/>
    </location>
    <ligand>
        <name>Ca(2+)</name>
        <dbReference type="ChEBI" id="CHEBI:29108"/>
    </ligand>
</feature>
<feature type="binding site" evidence="1">
    <location>
        <position position="49"/>
    </location>
    <ligand>
        <name>Ca(2+)</name>
        <dbReference type="ChEBI" id="CHEBI:29108"/>
    </ligand>
</feature>
<feature type="binding site" evidence="1">
    <location>
        <position position="66"/>
    </location>
    <ligand>
        <name>Ca(2+)</name>
        <dbReference type="ChEBI" id="CHEBI:29108"/>
    </ligand>
</feature>
<feature type="disulfide bond" evidence="1">
    <location>
        <begin position="28"/>
        <end position="89"/>
    </location>
</feature>
<feature type="disulfide bond" evidence="1">
    <location>
        <begin position="44"/>
        <end position="136"/>
    </location>
</feature>
<feature type="disulfide bond" evidence="1">
    <location>
        <begin position="46"/>
        <end position="62"/>
    </location>
</feature>
<feature type="disulfide bond" evidence="1">
    <location>
        <begin position="61"/>
        <end position="117"/>
    </location>
</feature>
<feature type="disulfide bond" evidence="1">
    <location>
        <begin position="68"/>
        <end position="110"/>
    </location>
</feature>
<feature type="disulfide bond" evidence="1">
    <location>
        <begin position="78"/>
        <end position="103"/>
    </location>
</feature>
<feature type="disulfide bond" evidence="1">
    <location>
        <begin position="96"/>
        <end position="108"/>
    </location>
</feature>
<feature type="non-terminal residue">
    <location>
        <position position="1"/>
    </location>
</feature>
<sequence length="137" mass="15034">AVCVSLLGASSIRPLPLHLGQFNNMIKCTIPGSTPWWDFSDYGCYCGYGGSGTPVDQLDRCCQTHDNCYTEAQKFSGCSPYTRKYSYECSEGTLTCKSDNDECAAFVCNCDRSAAICFARAPYNSNNVDIDLEAHCQ</sequence>
<comment type="function">
    <text evidence="1 5">Snake venom phospholipase A2 (PLA2) that may act in the hemostasis system of the prey (By similarity). Exhibits hydrolytic activities, and prefers the anionic micelles (dPPC with deoxycholate) (793 umol/mg/min) to the zwitterionic micelles (dPPC with Triton X-100) (591 umol/mg/min). PLA2 catalyzes the calcium-dependent hydrolysis of the 2-acyl groups in 3-sn-phosphoglycerides.</text>
</comment>
<comment type="catalytic activity">
    <reaction evidence="3 4">
        <text>a 1,2-diacyl-sn-glycero-3-phosphocholine + H2O = a 1-acyl-sn-glycero-3-phosphocholine + a fatty acid + H(+)</text>
        <dbReference type="Rhea" id="RHEA:15801"/>
        <dbReference type="ChEBI" id="CHEBI:15377"/>
        <dbReference type="ChEBI" id="CHEBI:15378"/>
        <dbReference type="ChEBI" id="CHEBI:28868"/>
        <dbReference type="ChEBI" id="CHEBI:57643"/>
        <dbReference type="ChEBI" id="CHEBI:58168"/>
        <dbReference type="EC" id="3.1.1.4"/>
    </reaction>
</comment>
<comment type="cofactor">
    <cofactor evidence="1">
        <name>Ca(2+)</name>
        <dbReference type="ChEBI" id="CHEBI:29108"/>
    </cofactor>
    <text evidence="1">Binds 1 Ca(2+) ion.</text>
</comment>
<comment type="subcellular location">
    <subcellularLocation>
        <location>Secreted</location>
    </subcellularLocation>
</comment>
<comment type="tissue specificity">
    <text>Expressed by the venom gland.</text>
</comment>
<comment type="mass spectrometry" mass="13342.0" method="Electrospray" evidence="5"/>
<comment type="similarity">
    <text evidence="6">Belongs to the phospholipase A2 family. Group I subfamily. D49 sub-subfamily.</text>
</comment>
<keyword id="KW-0106">Calcium</keyword>
<keyword id="KW-1015">Disulfide bond</keyword>
<keyword id="KW-1199">Hemostasis impairing toxin</keyword>
<keyword id="KW-0378">Hydrolase</keyword>
<keyword id="KW-0442">Lipid degradation</keyword>
<keyword id="KW-0443">Lipid metabolism</keyword>
<keyword id="KW-0479">Metal-binding</keyword>
<keyword id="KW-0964">Secreted</keyword>
<keyword id="KW-0732">Signal</keyword>
<keyword id="KW-0800">Toxin</keyword>
<organism>
    <name type="scientific">Walterinnesia aegyptia</name>
    <name type="common">Desert black snake</name>
    <dbReference type="NCBI Taxonomy" id="64182"/>
    <lineage>
        <taxon>Eukaryota</taxon>
        <taxon>Metazoa</taxon>
        <taxon>Chordata</taxon>
        <taxon>Craniata</taxon>
        <taxon>Vertebrata</taxon>
        <taxon>Euteleostomi</taxon>
        <taxon>Lepidosauria</taxon>
        <taxon>Squamata</taxon>
        <taxon>Bifurcata</taxon>
        <taxon>Unidentata</taxon>
        <taxon>Episquamata</taxon>
        <taxon>Toxicofera</taxon>
        <taxon>Serpentes</taxon>
        <taxon>Colubroidea</taxon>
        <taxon>Elapidae</taxon>
        <taxon>Elapinae</taxon>
        <taxon>Walterinnesia</taxon>
    </lineage>
</organism>
<proteinExistence type="evidence at protein level"/>
<accession>C1IC46</accession>
<evidence type="ECO:0000250" key="1"/>
<evidence type="ECO:0000255" key="2"/>
<evidence type="ECO:0000255" key="3">
    <source>
        <dbReference type="PROSITE-ProRule" id="PRU10035"/>
    </source>
</evidence>
<evidence type="ECO:0000255" key="4">
    <source>
        <dbReference type="PROSITE-ProRule" id="PRU10036"/>
    </source>
</evidence>
<evidence type="ECO:0000269" key="5">
    <source>
    </source>
</evidence>
<evidence type="ECO:0000305" key="6"/>